<proteinExistence type="evidence at transcript level"/>
<sequence length="502" mass="56268">MMKPDLNSPLPQSPQLQAFGSRSSDLATEDLFLKKLEAISQTAPNETVKNEFLNKEIPSINKLFTRFLKNRKKVIDWDKINPPPADMVLNYKDLPAITEQRTSELASKLAVLKLNGGLGTTMGCTGPKSVIEVRSEKTFLDLSVQQIKEMNERYNIKVPLVLMNSFNTHQETGKIIQKYKYSDVKIHSFNQSRFPRILKDNLMPVPDKLFGSDSEWYPPGHGDVFFALQNSGLLETLINEGKEYLFISNVDNLGAVVDFNILEAMDKNKVEYIMEVTNKTRADVKGGTLIQYEGKAKLLEIAQVPSSKVEEFKSIKKFKIFNTNNIWVNLKAMDRILKQNLLDDMDIIINPKVADGKNIIQLEIAAGAAIEFFNNARGVNVPRSRFLPVKSTSDLFIVQSNLYSLEKGVLVMNKNRPFTTVPLVKLGDNFKKVSDYQARIKGIPDILELDQLTVSGDITFGPNMVLKGTVIIVANHGSRIDIPEGSEFENKVVSGNLHCGAL</sequence>
<comment type="function">
    <text evidence="4">Plays a central role as a glucosyl donor in cellular metabolic pathways.</text>
</comment>
<comment type="catalytic activity">
    <reaction>
        <text>alpha-D-glucose 1-phosphate + UTP + H(+) = UDP-alpha-D-glucose + diphosphate</text>
        <dbReference type="Rhea" id="RHEA:19889"/>
        <dbReference type="ChEBI" id="CHEBI:15378"/>
        <dbReference type="ChEBI" id="CHEBI:33019"/>
        <dbReference type="ChEBI" id="CHEBI:46398"/>
        <dbReference type="ChEBI" id="CHEBI:58601"/>
        <dbReference type="ChEBI" id="CHEBI:58885"/>
        <dbReference type="EC" id="2.7.7.9"/>
    </reaction>
</comment>
<comment type="developmental stage">
    <text evidence="4">Expressed in both prestalk and prespore cells. Expression becomes strong after 12 hours of development and peaks at 16 hours.</text>
</comment>
<comment type="disruption phenotype">
    <text evidence="4">Cells undergo aberrant differentiation and development ending with small, gnarled fruiting bodies. They also have decreased spore viability and decreased levels of glycogen.</text>
</comment>
<comment type="similarity">
    <text evidence="5">Belongs to the UDPGP type 1 family.</text>
</comment>
<accession>Q54YZ0</accession>
<accession>Q27566</accession>
<accession>Q9XZN2</accession>
<evidence type="ECO:0000250" key="1">
    <source>
        <dbReference type="UniProtKB" id="Q16851"/>
    </source>
</evidence>
<evidence type="ECO:0000250" key="2">
    <source>
        <dbReference type="UniProtKB" id="Q9M9P3"/>
    </source>
</evidence>
<evidence type="ECO:0000256" key="3">
    <source>
        <dbReference type="SAM" id="MobiDB-lite"/>
    </source>
</evidence>
<evidence type="ECO:0000269" key="4">
    <source>
    </source>
</evidence>
<evidence type="ECO:0000305" key="5"/>
<name>UGPA2_DICDI</name>
<keyword id="KW-0548">Nucleotidyltransferase</keyword>
<keyword id="KW-1185">Reference proteome</keyword>
<keyword id="KW-0808">Transferase</keyword>
<dbReference type="EC" id="2.7.7.9"/>
<dbReference type="EMBL" id="AF150929">
    <property type="protein sequence ID" value="AAD34028.1"/>
    <property type="molecule type" value="mRNA"/>
</dbReference>
<dbReference type="EMBL" id="AAFI02000023">
    <property type="protein sequence ID" value="EAL68112.1"/>
    <property type="molecule type" value="Genomic_DNA"/>
</dbReference>
<dbReference type="EMBL" id="L28007">
    <property type="protein sequence ID" value="AAA91057.1"/>
    <property type="molecule type" value="Genomic_DNA"/>
</dbReference>
<dbReference type="RefSeq" id="XP_642062.1">
    <property type="nucleotide sequence ID" value="XM_636970.1"/>
</dbReference>
<dbReference type="SMR" id="Q54YZ0"/>
<dbReference type="FunCoup" id="Q54YZ0">
    <property type="interactions" value="565"/>
</dbReference>
<dbReference type="STRING" id="44689.Q54YZ0"/>
<dbReference type="PaxDb" id="44689-DDB0214911"/>
<dbReference type="EnsemblProtists" id="EAL68112">
    <property type="protein sequence ID" value="EAL68112"/>
    <property type="gene ID" value="DDB_G0277879"/>
</dbReference>
<dbReference type="GeneID" id="8621274"/>
<dbReference type="KEGG" id="ddi:DDB_G0277879"/>
<dbReference type="dictyBase" id="DDB_G0277879">
    <property type="gene designation" value="ugpB"/>
</dbReference>
<dbReference type="VEuPathDB" id="AmoebaDB:DDB_G0277879"/>
<dbReference type="eggNOG" id="KOG2638">
    <property type="taxonomic scope" value="Eukaryota"/>
</dbReference>
<dbReference type="HOGENOM" id="CLU_023632_3_0_1"/>
<dbReference type="InParanoid" id="Q54YZ0"/>
<dbReference type="OMA" id="KEYCFLS"/>
<dbReference type="PhylomeDB" id="Q54YZ0"/>
<dbReference type="Reactome" id="R-DDI-173599">
    <property type="pathway name" value="Formation of the active cofactor, UDP-glucuronate"/>
</dbReference>
<dbReference type="Reactome" id="R-DDI-3322077">
    <property type="pathway name" value="Glycogen synthesis"/>
</dbReference>
<dbReference type="PRO" id="PR:Q54YZ0"/>
<dbReference type="Proteomes" id="UP000002195">
    <property type="component" value="Chromosome 3"/>
</dbReference>
<dbReference type="GO" id="GO:0005737">
    <property type="term" value="C:cytoplasm"/>
    <property type="evidence" value="ECO:0000318"/>
    <property type="project" value="GO_Central"/>
</dbReference>
<dbReference type="GO" id="GO:0031012">
    <property type="term" value="C:extracellular matrix"/>
    <property type="evidence" value="ECO:0007005"/>
    <property type="project" value="dictyBase"/>
</dbReference>
<dbReference type="GO" id="GO:0003983">
    <property type="term" value="F:UTP:glucose-1-phosphate uridylyltransferase activity"/>
    <property type="evidence" value="ECO:0000314"/>
    <property type="project" value="dictyBase"/>
</dbReference>
<dbReference type="GO" id="GO:0000045">
    <property type="term" value="P:autophagosome assembly"/>
    <property type="evidence" value="ECO:0000315"/>
    <property type="project" value="dictyBase"/>
</dbReference>
<dbReference type="GO" id="GO:0030244">
    <property type="term" value="P:cellulose biosynthetic process"/>
    <property type="evidence" value="ECO:0000315"/>
    <property type="project" value="dictyBase"/>
</dbReference>
<dbReference type="GO" id="GO:0031154">
    <property type="term" value="P:culmination involved in sorocarp development"/>
    <property type="evidence" value="ECO:0000315"/>
    <property type="project" value="dictyBase"/>
</dbReference>
<dbReference type="GO" id="GO:0005977">
    <property type="term" value="P:glycogen metabolic process"/>
    <property type="evidence" value="ECO:0000315"/>
    <property type="project" value="dictyBase"/>
</dbReference>
<dbReference type="GO" id="GO:0006011">
    <property type="term" value="P:UDP-alpha-D-glucose metabolic process"/>
    <property type="evidence" value="ECO:0000318"/>
    <property type="project" value="GO_Central"/>
</dbReference>
<dbReference type="CDD" id="cd00897">
    <property type="entry name" value="UGPase_euk"/>
    <property type="match status" value="1"/>
</dbReference>
<dbReference type="FunFam" id="2.160.10.10:FF:000001">
    <property type="entry name" value="UTP--glucose-1-phosphate uridylyltransferase"/>
    <property type="match status" value="1"/>
</dbReference>
<dbReference type="FunFam" id="3.90.550.10:FF:000002">
    <property type="entry name" value="UTP--glucose-1-phosphate uridylyltransferase"/>
    <property type="match status" value="1"/>
</dbReference>
<dbReference type="Gene3D" id="2.160.10.10">
    <property type="entry name" value="Hexapeptide repeat proteins"/>
    <property type="match status" value="1"/>
</dbReference>
<dbReference type="Gene3D" id="3.90.550.10">
    <property type="entry name" value="Spore Coat Polysaccharide Biosynthesis Protein SpsA, Chain A"/>
    <property type="match status" value="1"/>
</dbReference>
<dbReference type="InterPro" id="IPR029044">
    <property type="entry name" value="Nucleotide-diphossugar_trans"/>
</dbReference>
<dbReference type="InterPro" id="IPR002618">
    <property type="entry name" value="UDPGP_fam"/>
</dbReference>
<dbReference type="InterPro" id="IPR016267">
    <property type="entry name" value="UDPGP_trans"/>
</dbReference>
<dbReference type="PANTHER" id="PTHR43511">
    <property type="match status" value="1"/>
</dbReference>
<dbReference type="Pfam" id="PF01704">
    <property type="entry name" value="UDPGP"/>
    <property type="match status" value="1"/>
</dbReference>
<dbReference type="PIRSF" id="PIRSF000806">
    <property type="entry name" value="UDPGP"/>
    <property type="match status" value="1"/>
</dbReference>
<dbReference type="SUPFAM" id="SSF53448">
    <property type="entry name" value="Nucleotide-diphospho-sugar transferases"/>
    <property type="match status" value="1"/>
</dbReference>
<feature type="chain" id="PRO_0000327942" description="UTP--glucose-1-phosphate uridylyltransferase 2">
    <location>
        <begin position="1"/>
        <end position="502"/>
    </location>
</feature>
<feature type="region of interest" description="Disordered" evidence="3">
    <location>
        <begin position="1"/>
        <end position="20"/>
    </location>
</feature>
<feature type="compositionally biased region" description="Polar residues" evidence="3">
    <location>
        <begin position="9"/>
        <end position="20"/>
    </location>
</feature>
<feature type="binding site" evidence="2">
    <location>
        <begin position="114"/>
        <end position="117"/>
    </location>
    <ligand>
        <name>UTP</name>
        <dbReference type="ChEBI" id="CHEBI:46398"/>
    </ligand>
</feature>
<feature type="binding site" evidence="1">
    <location>
        <begin position="116"/>
        <end position="117"/>
    </location>
    <ligand>
        <name>substrate</name>
    </ligand>
</feature>
<feature type="binding site" evidence="2">
    <location>
        <position position="128"/>
    </location>
    <ligand>
        <name>UTP</name>
        <dbReference type="ChEBI" id="CHEBI:46398"/>
    </ligand>
</feature>
<feature type="binding site" evidence="2">
    <location>
        <position position="191"/>
    </location>
    <ligand>
        <name>UTP</name>
        <dbReference type="ChEBI" id="CHEBI:46398"/>
    </ligand>
</feature>
<feature type="binding site" evidence="2">
    <location>
        <position position="220"/>
    </location>
    <ligand>
        <name>UTP</name>
        <dbReference type="ChEBI" id="CHEBI:46398"/>
    </ligand>
</feature>
<feature type="binding site" evidence="1">
    <location>
        <position position="221"/>
    </location>
    <ligand>
        <name>substrate</name>
    </ligand>
</feature>
<feature type="binding site" evidence="1">
    <location>
        <begin position="249"/>
        <end position="251"/>
    </location>
    <ligand>
        <name>substrate</name>
    </ligand>
</feature>
<feature type="binding site" evidence="2">
    <location>
        <position position="251"/>
    </location>
    <ligand>
        <name>UTP</name>
        <dbReference type="ChEBI" id="CHEBI:46398"/>
    </ligand>
</feature>
<feature type="binding site" evidence="2">
    <location>
        <position position="390"/>
    </location>
    <ligand>
        <name>UTP</name>
        <dbReference type="ChEBI" id="CHEBI:46398"/>
    </ligand>
</feature>
<feature type="sequence conflict" description="In Ref. 1; AAD34028." evidence="5" ref="1">
    <original>A</original>
    <variation>S</variation>
    <location>
        <position position="18"/>
    </location>
</feature>
<feature type="sequence conflict" description="In Ref. 3; AAA91057." evidence="5" ref="3">
    <original>I</original>
    <variation>V</variation>
    <location>
        <position position="320"/>
    </location>
</feature>
<feature type="sequence conflict" description="In Ref. 3; AAA91057." evidence="5" ref="3">
    <original>EI</original>
    <variation>RL</variation>
    <location>
        <begin position="363"/>
        <end position="364"/>
    </location>
</feature>
<protein>
    <recommendedName>
        <fullName>UTP--glucose-1-phosphate uridylyltransferase 2</fullName>
        <ecNumber>2.7.7.9</ecNumber>
    </recommendedName>
    <alternativeName>
        <fullName>UDP-glucose pyrophosphorylase 2</fullName>
        <shortName>UDPGP 2</shortName>
        <shortName>UGPase 2</shortName>
    </alternativeName>
</protein>
<organism>
    <name type="scientific">Dictyostelium discoideum</name>
    <name type="common">Social amoeba</name>
    <dbReference type="NCBI Taxonomy" id="44689"/>
    <lineage>
        <taxon>Eukaryota</taxon>
        <taxon>Amoebozoa</taxon>
        <taxon>Evosea</taxon>
        <taxon>Eumycetozoa</taxon>
        <taxon>Dictyostelia</taxon>
        <taxon>Dictyosteliales</taxon>
        <taxon>Dictyosteliaceae</taxon>
        <taxon>Dictyostelium</taxon>
    </lineage>
</organism>
<reference key="1">
    <citation type="journal article" date="2002" name="J. Biol. Chem.">
        <title>A second UDP-glucose pyrophosphorylase is required for differentiation and development in Dictyostelium discoideum.</title>
        <authorList>
            <person name="Bishop J.D."/>
            <person name="Moon B.C."/>
            <person name="Harrow F."/>
            <person name="Ratner D."/>
            <person name="Gomer R.H."/>
            <person name="Dottin R.P."/>
            <person name="Brazill D.T."/>
        </authorList>
    </citation>
    <scope>NUCLEOTIDE SEQUENCE [MRNA]</scope>
    <scope>FUNCTION</scope>
    <scope>DEVELOPMENTAL STAGE</scope>
    <scope>DISRUPTION PHENOTYPE</scope>
    <source>
        <strain>AX4</strain>
    </source>
</reference>
<reference key="2">
    <citation type="journal article" date="2005" name="Nature">
        <title>The genome of the social amoeba Dictyostelium discoideum.</title>
        <authorList>
            <person name="Eichinger L."/>
            <person name="Pachebat J.A."/>
            <person name="Gloeckner G."/>
            <person name="Rajandream M.A."/>
            <person name="Sucgang R."/>
            <person name="Berriman M."/>
            <person name="Song J."/>
            <person name="Olsen R."/>
            <person name="Szafranski K."/>
            <person name="Xu Q."/>
            <person name="Tunggal B."/>
            <person name="Kummerfeld S."/>
            <person name="Madera M."/>
            <person name="Konfortov B.A."/>
            <person name="Rivero F."/>
            <person name="Bankier A.T."/>
            <person name="Lehmann R."/>
            <person name="Hamlin N."/>
            <person name="Davies R."/>
            <person name="Gaudet P."/>
            <person name="Fey P."/>
            <person name="Pilcher K."/>
            <person name="Chen G."/>
            <person name="Saunders D."/>
            <person name="Sodergren E.J."/>
            <person name="Davis P."/>
            <person name="Kerhornou A."/>
            <person name="Nie X."/>
            <person name="Hall N."/>
            <person name="Anjard C."/>
            <person name="Hemphill L."/>
            <person name="Bason N."/>
            <person name="Farbrother P."/>
            <person name="Desany B."/>
            <person name="Just E."/>
            <person name="Morio T."/>
            <person name="Rost R."/>
            <person name="Churcher C.M."/>
            <person name="Cooper J."/>
            <person name="Haydock S."/>
            <person name="van Driessche N."/>
            <person name="Cronin A."/>
            <person name="Goodhead I."/>
            <person name="Muzny D.M."/>
            <person name="Mourier T."/>
            <person name="Pain A."/>
            <person name="Lu M."/>
            <person name="Harper D."/>
            <person name="Lindsay R."/>
            <person name="Hauser H."/>
            <person name="James K.D."/>
            <person name="Quiles M."/>
            <person name="Madan Babu M."/>
            <person name="Saito T."/>
            <person name="Buchrieser C."/>
            <person name="Wardroper A."/>
            <person name="Felder M."/>
            <person name="Thangavelu M."/>
            <person name="Johnson D."/>
            <person name="Knights A."/>
            <person name="Loulseged H."/>
            <person name="Mungall K.L."/>
            <person name="Oliver K."/>
            <person name="Price C."/>
            <person name="Quail M.A."/>
            <person name="Urushihara H."/>
            <person name="Hernandez J."/>
            <person name="Rabbinowitsch E."/>
            <person name="Steffen D."/>
            <person name="Sanders M."/>
            <person name="Ma J."/>
            <person name="Kohara Y."/>
            <person name="Sharp S."/>
            <person name="Simmonds M.N."/>
            <person name="Spiegler S."/>
            <person name="Tivey A."/>
            <person name="Sugano S."/>
            <person name="White B."/>
            <person name="Walker D."/>
            <person name="Woodward J.R."/>
            <person name="Winckler T."/>
            <person name="Tanaka Y."/>
            <person name="Shaulsky G."/>
            <person name="Schleicher M."/>
            <person name="Weinstock G.M."/>
            <person name="Rosenthal A."/>
            <person name="Cox E.C."/>
            <person name="Chisholm R.L."/>
            <person name="Gibbs R.A."/>
            <person name="Loomis W.F."/>
            <person name="Platzer M."/>
            <person name="Kay R.R."/>
            <person name="Williams J.G."/>
            <person name="Dear P.H."/>
            <person name="Noegel A.A."/>
            <person name="Barrell B.G."/>
            <person name="Kuspa A."/>
        </authorList>
    </citation>
    <scope>NUCLEOTIDE SEQUENCE [LARGE SCALE GENOMIC DNA]</scope>
    <source>
        <strain>AX4</strain>
    </source>
</reference>
<reference key="3">
    <citation type="submission" date="1996-03" db="EMBL/GenBank/DDBJ databases">
        <title>Null mutation of a UDPGP-glucose pyrophosphorylase gene by homologous recombination provides evidence for a second gene in Dictyostelium discoideum.</title>
        <authorList>
            <person name="Moon B.C."/>
            <person name="Haribabu B."/>
            <person name="Dottin R.P."/>
        </authorList>
    </citation>
    <scope>NUCLEOTIDE SEQUENCE [GENOMIC DNA] OF 319-370</scope>
</reference>
<gene>
    <name type="primary">ugpB</name>
    <name type="ORF">DDB_G0277879</name>
</gene>